<evidence type="ECO:0000255" key="1">
    <source>
        <dbReference type="HAMAP-Rule" id="MF_01671"/>
    </source>
</evidence>
<gene>
    <name evidence="1" type="primary">iolG</name>
    <name type="ordered locus">SeAg_B4707</name>
</gene>
<name>IOLG_SALA4</name>
<feature type="chain" id="PRO_1000187321" description="Inositol 2-dehydrogenase">
    <location>
        <begin position="1"/>
        <end position="336"/>
    </location>
</feature>
<protein>
    <recommendedName>
        <fullName evidence="1">Inositol 2-dehydrogenase</fullName>
        <ecNumber evidence="1">1.1.1.18</ecNumber>
    </recommendedName>
    <alternativeName>
        <fullName evidence="1">Myo-inositol 2-dehydrogenase</fullName>
        <shortName evidence="1">MI 2-dehydrogenase</shortName>
    </alternativeName>
</protein>
<dbReference type="EC" id="1.1.1.18" evidence="1"/>
<dbReference type="EMBL" id="CP001138">
    <property type="protein sequence ID" value="ACH52077.1"/>
    <property type="molecule type" value="Genomic_DNA"/>
</dbReference>
<dbReference type="SMR" id="B5F3F4"/>
<dbReference type="KEGG" id="sea:SeAg_B4707"/>
<dbReference type="HOGENOM" id="CLU_023194_0_1_6"/>
<dbReference type="Proteomes" id="UP000008819">
    <property type="component" value="Chromosome"/>
</dbReference>
<dbReference type="GO" id="GO:0050112">
    <property type="term" value="F:inositol 2-dehydrogenase (NAD+) activity"/>
    <property type="evidence" value="ECO:0007669"/>
    <property type="project" value="UniProtKB-UniRule"/>
</dbReference>
<dbReference type="GO" id="GO:0000166">
    <property type="term" value="F:nucleotide binding"/>
    <property type="evidence" value="ECO:0007669"/>
    <property type="project" value="InterPro"/>
</dbReference>
<dbReference type="GO" id="GO:0019310">
    <property type="term" value="P:inositol catabolic process"/>
    <property type="evidence" value="ECO:0007669"/>
    <property type="project" value="UniProtKB-UniRule"/>
</dbReference>
<dbReference type="Gene3D" id="3.30.360.10">
    <property type="entry name" value="Dihydrodipicolinate Reductase, domain 2"/>
    <property type="match status" value="1"/>
</dbReference>
<dbReference type="Gene3D" id="3.40.50.720">
    <property type="entry name" value="NAD(P)-binding Rossmann-like Domain"/>
    <property type="match status" value="1"/>
</dbReference>
<dbReference type="HAMAP" id="MF_01671">
    <property type="entry name" value="IolG"/>
    <property type="match status" value="1"/>
</dbReference>
<dbReference type="InterPro" id="IPR050424">
    <property type="entry name" value="Gfo-Idh-MocA_inositol_DH"/>
</dbReference>
<dbReference type="InterPro" id="IPR004104">
    <property type="entry name" value="Gfo/Idh/MocA-like_OxRdtase_C"/>
</dbReference>
<dbReference type="InterPro" id="IPR000683">
    <property type="entry name" value="Gfo/Idh/MocA-like_OxRdtase_N"/>
</dbReference>
<dbReference type="InterPro" id="IPR023794">
    <property type="entry name" value="MI/DCI_dehydrogenase"/>
</dbReference>
<dbReference type="InterPro" id="IPR036291">
    <property type="entry name" value="NAD(P)-bd_dom_sf"/>
</dbReference>
<dbReference type="PANTHER" id="PTHR43593">
    <property type="match status" value="1"/>
</dbReference>
<dbReference type="PANTHER" id="PTHR43593:SF1">
    <property type="entry name" value="INOSITOL 2-DEHYDROGENASE"/>
    <property type="match status" value="1"/>
</dbReference>
<dbReference type="Pfam" id="PF01408">
    <property type="entry name" value="GFO_IDH_MocA"/>
    <property type="match status" value="1"/>
</dbReference>
<dbReference type="Pfam" id="PF02894">
    <property type="entry name" value="GFO_IDH_MocA_C"/>
    <property type="match status" value="1"/>
</dbReference>
<dbReference type="SUPFAM" id="SSF55347">
    <property type="entry name" value="Glyceraldehyde-3-phosphate dehydrogenase-like, C-terminal domain"/>
    <property type="match status" value="1"/>
</dbReference>
<dbReference type="SUPFAM" id="SSF51735">
    <property type="entry name" value="NAD(P)-binding Rossmann-fold domains"/>
    <property type="match status" value="1"/>
</dbReference>
<sequence>MTLKAGIVGIGMIGSDHLRRLANTVSGVEVVAVCDIVAGRAQAALDKYAIEAKDYNDYHDLINDKDVEVVIITASNEAHADVAVAALNANKYVFCEKPLAVTAADCQRVIEAEQKNGKRMVQIGFMRRYDKGYVQLKNIIDSGEIGQPLMVHGRHYNASTVPEYKTPQAIYETLIHEIDVMHWLLNEDYKTVKVYFPRQSSLVTTLRDPQLVVMETTSGINIVVEVFVNCQYGYDIHCDVTGEKGMAELPTVASAAVRKAAKYSTDILVDWKQRFIDAYDIEFQDFFDRLNAGLPPAGPTSWDGYLAAVTADACVKSQETGNTEIVELPSKPDFYK</sequence>
<accession>B5F3F4</accession>
<proteinExistence type="inferred from homology"/>
<keyword id="KW-0520">NAD</keyword>
<keyword id="KW-0560">Oxidoreductase</keyword>
<reference key="1">
    <citation type="journal article" date="2011" name="J. Bacteriol.">
        <title>Comparative genomics of 28 Salmonella enterica isolates: evidence for CRISPR-mediated adaptive sublineage evolution.</title>
        <authorList>
            <person name="Fricke W.F."/>
            <person name="Mammel M.K."/>
            <person name="McDermott P.F."/>
            <person name="Tartera C."/>
            <person name="White D.G."/>
            <person name="Leclerc J.E."/>
            <person name="Ravel J."/>
            <person name="Cebula T.A."/>
        </authorList>
    </citation>
    <scope>NUCLEOTIDE SEQUENCE [LARGE SCALE GENOMIC DNA]</scope>
    <source>
        <strain>SL483</strain>
    </source>
</reference>
<comment type="function">
    <text evidence="1">Involved in the oxidation of myo-inositol (MI) to 2-keto-myo-inositol (2KMI or 2-inosose).</text>
</comment>
<comment type="catalytic activity">
    <reaction evidence="1">
        <text>myo-inositol + NAD(+) = scyllo-inosose + NADH + H(+)</text>
        <dbReference type="Rhea" id="RHEA:16949"/>
        <dbReference type="ChEBI" id="CHEBI:15378"/>
        <dbReference type="ChEBI" id="CHEBI:17268"/>
        <dbReference type="ChEBI" id="CHEBI:17811"/>
        <dbReference type="ChEBI" id="CHEBI:57540"/>
        <dbReference type="ChEBI" id="CHEBI:57945"/>
        <dbReference type="EC" id="1.1.1.18"/>
    </reaction>
</comment>
<comment type="subunit">
    <text evidence="1">Homotetramer.</text>
</comment>
<comment type="similarity">
    <text evidence="1">Belongs to the Gfo/Idh/MocA family.</text>
</comment>
<organism>
    <name type="scientific">Salmonella agona (strain SL483)</name>
    <dbReference type="NCBI Taxonomy" id="454166"/>
    <lineage>
        <taxon>Bacteria</taxon>
        <taxon>Pseudomonadati</taxon>
        <taxon>Pseudomonadota</taxon>
        <taxon>Gammaproteobacteria</taxon>
        <taxon>Enterobacterales</taxon>
        <taxon>Enterobacteriaceae</taxon>
        <taxon>Salmonella</taxon>
    </lineage>
</organism>